<name>VP27_HIS1I</name>
<organism>
    <name type="scientific">His1 virus (isolate Australia/Victoria)</name>
    <name type="common">His1V</name>
    <name type="synonym">Haloarcula hispanica virus 1</name>
    <dbReference type="NCBI Taxonomy" id="654912"/>
    <lineage>
        <taxon>Viruses</taxon>
        <taxon>Viruses incertae sedis</taxon>
        <taxon>Halspiviridae</taxon>
        <taxon>Salterprovirus</taxon>
        <taxon>Salterprovirus His1</taxon>
    </lineage>
</organism>
<protein>
    <recommendedName>
        <fullName>Structural protein 27</fullName>
    </recommendedName>
</protein>
<feature type="chain" id="PRO_0000384895" description="Structural protein 27">
    <location>
        <begin position="1"/>
        <end position="505"/>
    </location>
</feature>
<feature type="region of interest" description="Hydrophobic" evidence="1">
    <location>
        <begin position="20"/>
        <end position="40"/>
    </location>
</feature>
<feature type="region of interest" description="Hydrophobic" evidence="1">
    <location>
        <begin position="423"/>
        <end position="443"/>
    </location>
</feature>
<feature type="region of interest" description="Hydrophobic" evidence="1">
    <location>
        <begin position="470"/>
        <end position="490"/>
    </location>
</feature>
<comment type="subcellular location">
    <subcellularLocation>
        <location evidence="2">Virion</location>
    </subcellularLocation>
</comment>
<comment type="miscellaneous">
    <text evidence="2">The virion does not contain any lipid membrane.</text>
</comment>
<accession>Q25BG8</accession>
<sequence length="505" mass="55174">MTEKTTKSKNSIATKNIVRVSLICFLLVFSVTVPFVFSPVSNASGQTTTLVDGFEDGTLSPWQTFQSFSVNTNNPYKGDYSAVANSDDNTIFVTTNNDQYTAATVAVNIKDSNNNARILFQDRPDSNNADLLANIYIESGNVGFYGGNGQDTGIDISYSEWVVFEIKNIDYSNQKYDIEVYDKSGNSLGSFSGADFYDSVSSMNGVDIYKVDSGSRVDHFTTGEFVSKSTVSGNVTDLEGNPMANATVTADSVSTTTDDNGSYSIKLADGTYDITANKKNYKPQTKQIEVNGSAKTVDFSLGKIEKQLSIEGPNFVRPNQTIPYKVEYTNETGTYDVSNYSNITSANTTLLSIDETNKTLLAGGQNATVKVTAKYNTTEVTTNVTKQYYVSYLKLENIDTVPPAKWMQAFLGFDDGYAENKNMKGIGSDIQWLLFTVIIMSTIAKLFDNPWAGIGSGVITGVLLWVLEYIGLGLLLSMVFFGIFIGLILVRVRRDGGNEVTINES</sequence>
<proteinExistence type="evidence at protein level"/>
<gene>
    <name type="ORF">ORF27</name>
</gene>
<keyword id="KW-0903">Direct protein sequencing</keyword>
<keyword id="KW-1185">Reference proteome</keyword>
<keyword id="KW-0946">Virion</keyword>
<dbReference type="EMBL" id="AF191796">
    <property type="protein sequence ID" value="AAQ13746.1"/>
    <property type="molecule type" value="Genomic_DNA"/>
</dbReference>
<dbReference type="RefSeq" id="YP_529539.1">
    <property type="nucleotide sequence ID" value="NC_007914.1"/>
</dbReference>
<dbReference type="SMR" id="Q25BG8"/>
<dbReference type="KEGG" id="vg:5142401"/>
<dbReference type="Proteomes" id="UP000007024">
    <property type="component" value="Segment"/>
</dbReference>
<dbReference type="GO" id="GO:0005615">
    <property type="term" value="C:extracellular space"/>
    <property type="evidence" value="ECO:0007669"/>
    <property type="project" value="TreeGrafter"/>
</dbReference>
<dbReference type="GO" id="GO:0044423">
    <property type="term" value="C:virion component"/>
    <property type="evidence" value="ECO:0007669"/>
    <property type="project" value="UniProtKB-KW"/>
</dbReference>
<dbReference type="GO" id="GO:0004181">
    <property type="term" value="F:metallocarboxypeptidase activity"/>
    <property type="evidence" value="ECO:0007669"/>
    <property type="project" value="TreeGrafter"/>
</dbReference>
<dbReference type="GO" id="GO:0006518">
    <property type="term" value="P:peptide metabolic process"/>
    <property type="evidence" value="ECO:0007669"/>
    <property type="project" value="TreeGrafter"/>
</dbReference>
<dbReference type="GO" id="GO:0016485">
    <property type="term" value="P:protein processing"/>
    <property type="evidence" value="ECO:0007669"/>
    <property type="project" value="TreeGrafter"/>
</dbReference>
<dbReference type="Gene3D" id="2.60.40.1120">
    <property type="entry name" value="Carboxypeptidase-like, regulatory domain"/>
    <property type="match status" value="1"/>
</dbReference>
<dbReference type="InterPro" id="IPR008969">
    <property type="entry name" value="CarboxyPept-like_regulatory"/>
</dbReference>
<dbReference type="InterPro" id="IPR050753">
    <property type="entry name" value="Peptidase_M14_domain"/>
</dbReference>
<dbReference type="PANTHER" id="PTHR11532:SF57">
    <property type="entry name" value="CARBOXYPEPTIDASE D, B"/>
    <property type="match status" value="1"/>
</dbReference>
<dbReference type="PANTHER" id="PTHR11532">
    <property type="entry name" value="PROTEASE M14 CARBOXYPEPTIDASE"/>
    <property type="match status" value="1"/>
</dbReference>
<dbReference type="Pfam" id="PF13620">
    <property type="entry name" value="CarboxypepD_reg"/>
    <property type="match status" value="1"/>
</dbReference>
<dbReference type="SUPFAM" id="SSF49464">
    <property type="entry name" value="Carboxypeptidase regulatory domain-like"/>
    <property type="match status" value="1"/>
</dbReference>
<reference key="1">
    <citation type="journal article" date="2006" name="Virology">
        <title>His1 and His2 are distantly related, spindle-shaped haloviruses belonging to the novel virus group, Salterprovirus.</title>
        <authorList>
            <person name="Bath C."/>
            <person name="Cukalac T."/>
            <person name="Porter K."/>
            <person name="Dyall-Smith M.L."/>
        </authorList>
    </citation>
    <scope>NUCLEOTIDE SEQUENCE [GENOMIC DNA]</scope>
</reference>
<reference key="2">
    <citation type="journal article" date="2013" name="Environ. Microbiol.">
        <title>Modified coat protein forms the flexible spindle-shaped virion of haloarchaeal virus His1.</title>
        <authorList>
            <person name="Pietilae M.K."/>
            <person name="Atanasova N.S."/>
            <person name="Oksanen H.M."/>
            <person name="Bamford D.H."/>
        </authorList>
    </citation>
    <scope>PROTEIN SEQUENCE OF 167-184; 210-229; 295-326 AND 374-406</scope>
    <scope>SUBCELLULAR LOCATION</scope>
</reference>
<evidence type="ECO:0000255" key="1"/>
<evidence type="ECO:0000269" key="2">
    <source>
    </source>
</evidence>
<organismHost>
    <name type="scientific">Haloarcula hispanica</name>
    <dbReference type="NCBI Taxonomy" id="51589"/>
</organismHost>